<dbReference type="EMBL" id="AJ277718">
    <property type="protein sequence ID" value="CAB89864.1"/>
    <property type="molecule type" value="Genomic_DNA"/>
</dbReference>
<dbReference type="SMR" id="Q9P864"/>
<dbReference type="GO" id="GO:0005886">
    <property type="term" value="C:plasma membrane"/>
    <property type="evidence" value="ECO:0007669"/>
    <property type="project" value="UniProtKB-SubCell"/>
</dbReference>
<dbReference type="GO" id="GO:0030833">
    <property type="term" value="P:regulation of actin filament polymerization"/>
    <property type="evidence" value="ECO:0007669"/>
    <property type="project" value="TreeGrafter"/>
</dbReference>
<dbReference type="CDD" id="cd11855">
    <property type="entry name" value="SH3_Sho1p"/>
    <property type="match status" value="1"/>
</dbReference>
<dbReference type="FunFam" id="2.30.30.40:FF:000213">
    <property type="entry name" value="High osmolarity signaling protein SHO1"/>
    <property type="match status" value="1"/>
</dbReference>
<dbReference type="Gene3D" id="2.30.30.40">
    <property type="entry name" value="SH3 Domains"/>
    <property type="match status" value="1"/>
</dbReference>
<dbReference type="InterPro" id="IPR036028">
    <property type="entry name" value="SH3-like_dom_sf"/>
</dbReference>
<dbReference type="InterPro" id="IPR001452">
    <property type="entry name" value="SH3_domain"/>
</dbReference>
<dbReference type="InterPro" id="IPR035522">
    <property type="entry name" value="Sho1_SH3"/>
</dbReference>
<dbReference type="PANTHER" id="PTHR15735">
    <property type="entry name" value="FCH AND DOUBLE SH3 DOMAINS PROTEIN"/>
    <property type="match status" value="1"/>
</dbReference>
<dbReference type="PANTHER" id="PTHR15735:SF20">
    <property type="entry name" value="HIGH OSMOLARITY SIGNALING PROTEIN SHO1"/>
    <property type="match status" value="1"/>
</dbReference>
<dbReference type="Pfam" id="PF00018">
    <property type="entry name" value="SH3_1"/>
    <property type="match status" value="1"/>
</dbReference>
<dbReference type="PRINTS" id="PR00452">
    <property type="entry name" value="SH3DOMAIN"/>
</dbReference>
<dbReference type="SMART" id="SM00326">
    <property type="entry name" value="SH3"/>
    <property type="match status" value="1"/>
</dbReference>
<dbReference type="SUPFAM" id="SSF50044">
    <property type="entry name" value="SH3-domain"/>
    <property type="match status" value="1"/>
</dbReference>
<dbReference type="PROSITE" id="PS50002">
    <property type="entry name" value="SH3"/>
    <property type="match status" value="1"/>
</dbReference>
<gene>
    <name type="primary">SHO1</name>
</gene>
<organism>
    <name type="scientific">Cyberlindnera jadinii</name>
    <name type="common">Torula yeast</name>
    <name type="synonym">Pichia jadinii</name>
    <dbReference type="NCBI Taxonomy" id="4903"/>
    <lineage>
        <taxon>Eukaryota</taxon>
        <taxon>Fungi</taxon>
        <taxon>Dikarya</taxon>
        <taxon>Ascomycota</taxon>
        <taxon>Saccharomycotina</taxon>
        <taxon>Saccharomycetes</taxon>
        <taxon>Phaffomycetales</taxon>
        <taxon>Phaffomycetaceae</taxon>
        <taxon>Cyberlindnera</taxon>
    </lineage>
</organism>
<comment type="function">
    <text evidence="4">Plasma membrane osmosensor that activates the high osmolarity glycerol (HOG) MAPK signaling pathway in response to high osmolarity.</text>
</comment>
<comment type="subunit">
    <text evidence="1">Forms homooligomers.</text>
</comment>
<comment type="subcellular location">
    <subcellularLocation>
        <location evidence="1">Cell membrane</location>
        <topology evidence="1">Multi-pass membrane protein</topology>
    </subcellularLocation>
</comment>
<comment type="similarity">
    <text evidence="5">Belongs to the SHO1 family.</text>
</comment>
<proteinExistence type="inferred from homology"/>
<sequence>MSTPEYSTSAKSRFDITNLTTDPFVVATWSVAMISWVIAFIGSIVANIEGSFPRFTWWGLVFQLLMLVFLPAVYCFDVVEWYRLFLTCGYSIAFIYTTNSATNLVWSGGSATGAASAGVILLSMVNLIWVFYYGSDNASPINQWIDSFSLRGPKRSSVSPFHNSRPISHDKYSGSENDEFKHSSWNNQRYMSSTALSGLENVSQGDTLETTPFNSPDHDGLGTNITAGGTNITIDEFPYTARALYNYQKSPDDENEISFEKDEILKVNDIHSRWWQAKRANGEIGICPSNYVELIE</sequence>
<keyword id="KW-1003">Cell membrane</keyword>
<keyword id="KW-0472">Membrane</keyword>
<keyword id="KW-0728">SH3 domain</keyword>
<keyword id="KW-0346">Stress response</keyword>
<keyword id="KW-0812">Transmembrane</keyword>
<keyword id="KW-1133">Transmembrane helix</keyword>
<name>SHO1_CYBJA</name>
<accession>Q9P864</accession>
<evidence type="ECO:0000250" key="1"/>
<evidence type="ECO:0000255" key="2"/>
<evidence type="ECO:0000255" key="3">
    <source>
        <dbReference type="PROSITE-ProRule" id="PRU00192"/>
    </source>
</evidence>
<evidence type="ECO:0000269" key="4">
    <source>
    </source>
</evidence>
<evidence type="ECO:0000305" key="5"/>
<protein>
    <recommendedName>
        <fullName>High osmolarity signaling protein SHO1</fullName>
    </recommendedName>
    <alternativeName>
        <fullName>Osmosensor SHO1</fullName>
    </alternativeName>
</protein>
<reference key="1">
    <citation type="journal article" date="2000" name="Biochim. Biophys. Acta">
        <title>Candidate osmosensors from Candida utilis and Kluyveromyces lactis: structural and functional homology to the Sho1p putative osmosensor from Saccharomyces cerevisiae.</title>
        <authorList>
            <person name="Siderius M."/>
            <person name="Kolen C.P."/>
            <person name="van Heerikhuizen H."/>
            <person name="Mager W.H."/>
        </authorList>
    </citation>
    <scope>NUCLEOTIDE SEQUENCE [GENOMIC DNA]</scope>
    <scope>FUNCTION</scope>
</reference>
<feature type="chain" id="PRO_0000410373" description="High osmolarity signaling protein SHO1">
    <location>
        <begin position="1"/>
        <end position="296"/>
    </location>
</feature>
<feature type="topological domain" description="Cytoplasmic" evidence="2">
    <location>
        <begin position="1"/>
        <end position="23"/>
    </location>
</feature>
<feature type="transmembrane region" description="Helical" evidence="2">
    <location>
        <begin position="24"/>
        <end position="44"/>
    </location>
</feature>
<feature type="topological domain" description="Extracellular" evidence="2">
    <location>
        <begin position="45"/>
        <end position="54"/>
    </location>
</feature>
<feature type="transmembrane region" description="Helical" evidence="2">
    <location>
        <begin position="55"/>
        <end position="77"/>
    </location>
</feature>
<feature type="topological domain" description="Cytoplasmic" evidence="2">
    <location>
        <begin position="78"/>
        <end position="83"/>
    </location>
</feature>
<feature type="transmembrane region" description="Helical" evidence="2">
    <location>
        <begin position="84"/>
        <end position="106"/>
    </location>
</feature>
<feature type="topological domain" description="Extracellular" evidence="2">
    <location>
        <begin position="107"/>
        <end position="110"/>
    </location>
</feature>
<feature type="transmembrane region" description="Helical" evidence="2">
    <location>
        <begin position="111"/>
        <end position="131"/>
    </location>
</feature>
<feature type="topological domain" description="Cytoplasmic" evidence="2">
    <location>
        <begin position="132"/>
        <end position="296"/>
    </location>
</feature>
<feature type="domain" description="SH3" evidence="3">
    <location>
        <begin position="236"/>
        <end position="296"/>
    </location>
</feature>